<accession>Q74GH5</accession>
<comment type="function">
    <text evidence="1">Catalyzes the last two sequential reactions in the de novo biosynthetic pathway for UDP-N-acetylglucosamine (UDP-GlcNAc). The C-terminal domain catalyzes the transfer of acetyl group from acetyl coenzyme A to glucosamine-1-phosphate (GlcN-1-P) to produce N-acetylglucosamine-1-phosphate (GlcNAc-1-P), which is converted into UDP-GlcNAc by the transfer of uridine 5-monophosphate (from uridine 5-triphosphate), a reaction catalyzed by the N-terminal domain.</text>
</comment>
<comment type="catalytic activity">
    <reaction evidence="1">
        <text>alpha-D-glucosamine 1-phosphate + acetyl-CoA = N-acetyl-alpha-D-glucosamine 1-phosphate + CoA + H(+)</text>
        <dbReference type="Rhea" id="RHEA:13725"/>
        <dbReference type="ChEBI" id="CHEBI:15378"/>
        <dbReference type="ChEBI" id="CHEBI:57287"/>
        <dbReference type="ChEBI" id="CHEBI:57288"/>
        <dbReference type="ChEBI" id="CHEBI:57776"/>
        <dbReference type="ChEBI" id="CHEBI:58516"/>
        <dbReference type="EC" id="2.3.1.157"/>
    </reaction>
</comment>
<comment type="catalytic activity">
    <reaction evidence="1">
        <text>N-acetyl-alpha-D-glucosamine 1-phosphate + UTP + H(+) = UDP-N-acetyl-alpha-D-glucosamine + diphosphate</text>
        <dbReference type="Rhea" id="RHEA:13509"/>
        <dbReference type="ChEBI" id="CHEBI:15378"/>
        <dbReference type="ChEBI" id="CHEBI:33019"/>
        <dbReference type="ChEBI" id="CHEBI:46398"/>
        <dbReference type="ChEBI" id="CHEBI:57705"/>
        <dbReference type="ChEBI" id="CHEBI:57776"/>
        <dbReference type="EC" id="2.7.7.23"/>
    </reaction>
</comment>
<comment type="cofactor">
    <cofactor evidence="1">
        <name>Mg(2+)</name>
        <dbReference type="ChEBI" id="CHEBI:18420"/>
    </cofactor>
    <text evidence="1">Binds 1 Mg(2+) ion per subunit.</text>
</comment>
<comment type="pathway">
    <text evidence="1">Nucleotide-sugar biosynthesis; UDP-N-acetyl-alpha-D-glucosamine biosynthesis; N-acetyl-alpha-D-glucosamine 1-phosphate from alpha-D-glucosamine 6-phosphate (route II): step 2/2.</text>
</comment>
<comment type="pathway">
    <text evidence="1">Nucleotide-sugar biosynthesis; UDP-N-acetyl-alpha-D-glucosamine biosynthesis; UDP-N-acetyl-alpha-D-glucosamine from N-acetyl-alpha-D-glucosamine 1-phosphate: step 1/1.</text>
</comment>
<comment type="pathway">
    <text evidence="1">Bacterial outer membrane biogenesis; LPS lipid A biosynthesis.</text>
</comment>
<comment type="subunit">
    <text evidence="1">Homotrimer.</text>
</comment>
<comment type="subcellular location">
    <subcellularLocation>
        <location evidence="1">Cytoplasm</location>
    </subcellularLocation>
</comment>
<comment type="similarity">
    <text evidence="1">In the N-terminal section; belongs to the N-acetylglucosamine-1-phosphate uridyltransferase family.</text>
</comment>
<comment type="similarity">
    <text evidence="1">In the C-terminal section; belongs to the transferase hexapeptide repeat family.</text>
</comment>
<dbReference type="EC" id="2.7.7.23" evidence="1"/>
<dbReference type="EC" id="2.3.1.157" evidence="1"/>
<dbReference type="EMBL" id="AE017180">
    <property type="protein sequence ID" value="AAR33605.1"/>
    <property type="molecule type" value="Genomic_DNA"/>
</dbReference>
<dbReference type="RefSeq" id="NP_951332.1">
    <property type="nucleotide sequence ID" value="NC_002939.5"/>
</dbReference>
<dbReference type="RefSeq" id="WP_010940944.1">
    <property type="nucleotide sequence ID" value="NC_002939.5"/>
</dbReference>
<dbReference type="SMR" id="Q74GH5"/>
<dbReference type="FunCoup" id="Q74GH5">
    <property type="interactions" value="523"/>
</dbReference>
<dbReference type="STRING" id="243231.GSU0271"/>
<dbReference type="EnsemblBacteria" id="AAR33605">
    <property type="protein sequence ID" value="AAR33605"/>
    <property type="gene ID" value="GSU0271"/>
</dbReference>
<dbReference type="KEGG" id="gsu:GSU0271"/>
<dbReference type="PATRIC" id="fig|243231.5.peg.270"/>
<dbReference type="eggNOG" id="COG1207">
    <property type="taxonomic scope" value="Bacteria"/>
</dbReference>
<dbReference type="HOGENOM" id="CLU_029499_15_2_7"/>
<dbReference type="InParanoid" id="Q74GH5"/>
<dbReference type="OrthoDB" id="9775031at2"/>
<dbReference type="UniPathway" id="UPA00113">
    <property type="reaction ID" value="UER00532"/>
</dbReference>
<dbReference type="UniPathway" id="UPA00113">
    <property type="reaction ID" value="UER00533"/>
</dbReference>
<dbReference type="UniPathway" id="UPA00973"/>
<dbReference type="Proteomes" id="UP000000577">
    <property type="component" value="Chromosome"/>
</dbReference>
<dbReference type="GO" id="GO:0005737">
    <property type="term" value="C:cytoplasm"/>
    <property type="evidence" value="ECO:0007669"/>
    <property type="project" value="UniProtKB-SubCell"/>
</dbReference>
<dbReference type="GO" id="GO:0016020">
    <property type="term" value="C:membrane"/>
    <property type="evidence" value="ECO:0007669"/>
    <property type="project" value="GOC"/>
</dbReference>
<dbReference type="GO" id="GO:0019134">
    <property type="term" value="F:glucosamine-1-phosphate N-acetyltransferase activity"/>
    <property type="evidence" value="ECO:0007669"/>
    <property type="project" value="UniProtKB-UniRule"/>
</dbReference>
<dbReference type="GO" id="GO:0000287">
    <property type="term" value="F:magnesium ion binding"/>
    <property type="evidence" value="ECO:0007669"/>
    <property type="project" value="UniProtKB-UniRule"/>
</dbReference>
<dbReference type="GO" id="GO:0003977">
    <property type="term" value="F:UDP-N-acetylglucosamine diphosphorylase activity"/>
    <property type="evidence" value="ECO:0007669"/>
    <property type="project" value="UniProtKB-UniRule"/>
</dbReference>
<dbReference type="GO" id="GO:0000902">
    <property type="term" value="P:cell morphogenesis"/>
    <property type="evidence" value="ECO:0007669"/>
    <property type="project" value="UniProtKB-UniRule"/>
</dbReference>
<dbReference type="GO" id="GO:0071555">
    <property type="term" value="P:cell wall organization"/>
    <property type="evidence" value="ECO:0007669"/>
    <property type="project" value="UniProtKB-KW"/>
</dbReference>
<dbReference type="GO" id="GO:0009245">
    <property type="term" value="P:lipid A biosynthetic process"/>
    <property type="evidence" value="ECO:0007669"/>
    <property type="project" value="UniProtKB-UniRule"/>
</dbReference>
<dbReference type="GO" id="GO:0009252">
    <property type="term" value="P:peptidoglycan biosynthetic process"/>
    <property type="evidence" value="ECO:0007669"/>
    <property type="project" value="UniProtKB-UniRule"/>
</dbReference>
<dbReference type="GO" id="GO:0008360">
    <property type="term" value="P:regulation of cell shape"/>
    <property type="evidence" value="ECO:0007669"/>
    <property type="project" value="UniProtKB-KW"/>
</dbReference>
<dbReference type="GO" id="GO:0006048">
    <property type="term" value="P:UDP-N-acetylglucosamine biosynthetic process"/>
    <property type="evidence" value="ECO:0007669"/>
    <property type="project" value="UniProtKB-UniPathway"/>
</dbReference>
<dbReference type="CDD" id="cd02540">
    <property type="entry name" value="GT2_GlmU_N_bac"/>
    <property type="match status" value="1"/>
</dbReference>
<dbReference type="CDD" id="cd03353">
    <property type="entry name" value="LbH_GlmU_C"/>
    <property type="match status" value="1"/>
</dbReference>
<dbReference type="Gene3D" id="2.160.10.10">
    <property type="entry name" value="Hexapeptide repeat proteins"/>
    <property type="match status" value="2"/>
</dbReference>
<dbReference type="Gene3D" id="3.90.550.10">
    <property type="entry name" value="Spore Coat Polysaccharide Biosynthesis Protein SpsA, Chain A"/>
    <property type="match status" value="1"/>
</dbReference>
<dbReference type="HAMAP" id="MF_01631">
    <property type="entry name" value="GlmU"/>
    <property type="match status" value="1"/>
</dbReference>
<dbReference type="InterPro" id="IPR005882">
    <property type="entry name" value="Bifunctional_GlmU"/>
</dbReference>
<dbReference type="InterPro" id="IPR050065">
    <property type="entry name" value="GlmU-like"/>
</dbReference>
<dbReference type="InterPro" id="IPR038009">
    <property type="entry name" value="GlmU_C_LbH"/>
</dbReference>
<dbReference type="InterPro" id="IPR001451">
    <property type="entry name" value="Hexapep"/>
</dbReference>
<dbReference type="InterPro" id="IPR005835">
    <property type="entry name" value="NTP_transferase_dom"/>
</dbReference>
<dbReference type="InterPro" id="IPR029044">
    <property type="entry name" value="Nucleotide-diphossugar_trans"/>
</dbReference>
<dbReference type="InterPro" id="IPR011004">
    <property type="entry name" value="Trimer_LpxA-like_sf"/>
</dbReference>
<dbReference type="PANTHER" id="PTHR43584:SF3">
    <property type="entry name" value="BIFUNCTIONAL PROTEIN GLMU"/>
    <property type="match status" value="1"/>
</dbReference>
<dbReference type="PANTHER" id="PTHR43584">
    <property type="entry name" value="NUCLEOTIDYL TRANSFERASE"/>
    <property type="match status" value="1"/>
</dbReference>
<dbReference type="Pfam" id="PF00132">
    <property type="entry name" value="Hexapep"/>
    <property type="match status" value="2"/>
</dbReference>
<dbReference type="Pfam" id="PF14602">
    <property type="entry name" value="Hexapep_2"/>
    <property type="match status" value="1"/>
</dbReference>
<dbReference type="Pfam" id="PF00483">
    <property type="entry name" value="NTP_transferase"/>
    <property type="match status" value="1"/>
</dbReference>
<dbReference type="SUPFAM" id="SSF53448">
    <property type="entry name" value="Nucleotide-diphospho-sugar transferases"/>
    <property type="match status" value="1"/>
</dbReference>
<dbReference type="SUPFAM" id="SSF51161">
    <property type="entry name" value="Trimeric LpxA-like enzymes"/>
    <property type="match status" value="1"/>
</dbReference>
<organism>
    <name type="scientific">Geobacter sulfurreducens (strain ATCC 51573 / DSM 12127 / PCA)</name>
    <dbReference type="NCBI Taxonomy" id="243231"/>
    <lineage>
        <taxon>Bacteria</taxon>
        <taxon>Pseudomonadati</taxon>
        <taxon>Thermodesulfobacteriota</taxon>
        <taxon>Desulfuromonadia</taxon>
        <taxon>Geobacterales</taxon>
        <taxon>Geobacteraceae</taxon>
        <taxon>Geobacter</taxon>
    </lineage>
</organism>
<proteinExistence type="inferred from homology"/>
<gene>
    <name evidence="1" type="primary">glmU</name>
    <name type="ordered locus">GSU0271</name>
</gene>
<protein>
    <recommendedName>
        <fullName evidence="1">Bifunctional protein GlmU</fullName>
    </recommendedName>
    <domain>
        <recommendedName>
            <fullName evidence="1">UDP-N-acetylglucosamine pyrophosphorylase</fullName>
            <ecNumber evidence="1">2.7.7.23</ecNumber>
        </recommendedName>
        <alternativeName>
            <fullName evidence="1">N-acetylglucosamine-1-phosphate uridyltransferase</fullName>
        </alternativeName>
    </domain>
    <domain>
        <recommendedName>
            <fullName evidence="1">Glucosamine-1-phosphate N-acetyltransferase</fullName>
            <ecNumber evidence="1">2.3.1.157</ecNumber>
        </recommendedName>
    </domain>
</protein>
<name>GLMU_GEOSL</name>
<keyword id="KW-0012">Acyltransferase</keyword>
<keyword id="KW-0133">Cell shape</keyword>
<keyword id="KW-0961">Cell wall biogenesis/degradation</keyword>
<keyword id="KW-0963">Cytoplasm</keyword>
<keyword id="KW-0460">Magnesium</keyword>
<keyword id="KW-0479">Metal-binding</keyword>
<keyword id="KW-0511">Multifunctional enzyme</keyword>
<keyword id="KW-0548">Nucleotidyltransferase</keyword>
<keyword id="KW-0573">Peptidoglycan synthesis</keyword>
<keyword id="KW-1185">Reference proteome</keyword>
<keyword id="KW-0677">Repeat</keyword>
<keyword id="KW-0808">Transferase</keyword>
<evidence type="ECO:0000255" key="1">
    <source>
        <dbReference type="HAMAP-Rule" id="MF_01631"/>
    </source>
</evidence>
<reference key="1">
    <citation type="journal article" date="2003" name="Science">
        <title>Genome of Geobacter sulfurreducens: metal reduction in subsurface environments.</title>
        <authorList>
            <person name="Methe B.A."/>
            <person name="Nelson K.E."/>
            <person name="Eisen J.A."/>
            <person name="Paulsen I.T."/>
            <person name="Nelson W.C."/>
            <person name="Heidelberg J.F."/>
            <person name="Wu D."/>
            <person name="Wu M."/>
            <person name="Ward N.L."/>
            <person name="Beanan M.J."/>
            <person name="Dodson R.J."/>
            <person name="Madupu R."/>
            <person name="Brinkac L.M."/>
            <person name="Daugherty S.C."/>
            <person name="DeBoy R.T."/>
            <person name="Durkin A.S."/>
            <person name="Gwinn M.L."/>
            <person name="Kolonay J.F."/>
            <person name="Sullivan S.A."/>
            <person name="Haft D.H."/>
            <person name="Selengut J."/>
            <person name="Davidsen T.M."/>
            <person name="Zafar N."/>
            <person name="White O."/>
            <person name="Tran B."/>
            <person name="Romero C."/>
            <person name="Forberger H.A."/>
            <person name="Weidman J.F."/>
            <person name="Khouri H.M."/>
            <person name="Feldblyum T.V."/>
            <person name="Utterback T.R."/>
            <person name="Van Aken S.E."/>
            <person name="Lovley D.R."/>
            <person name="Fraser C.M."/>
        </authorList>
    </citation>
    <scope>NUCLEOTIDE SEQUENCE [LARGE SCALE GENOMIC DNA]</scope>
    <source>
        <strain>ATCC 51573 / DSM 12127 / PCA</strain>
    </source>
</reference>
<sequence length="476" mass="50314">MDNLAAIILAAGKGTRMKSGIVKVMHPLAGAPMVAWPVAVARQAGAGRIVAVVGHQAERLREHFSNDADITLAVQEEQLGTGHAVACAAGDLSGFSGKVLILCGDVPLIRTETLRAMVTAHEATGAVLTVLTARQENPHGYGRIIRGFDGRVIRIVEEKDATPDERSRTEVNAGIYCAEASFLFDAVKRIGNDNAQGEYYLTDIITMANDRGLRCTAHPVADPVEVMGINDRVQLAEAARHARRRIAEEHMLNGVTLVDPAATYIDQGVVIGADTTIQPGVQIAGGCRVGEGCTIEAGAIIKGSELGDRCVVESRAVIRGCRLGSDVVIKAGTVMEDSTVMDHAAIGPMAHLRPGSELGAHVKIGNFVETKKIVMGEGSKASHLTYLGDATIGRNVNVGCGTITCNYDGVNKHRTVIGDDVFVGSDVQFVAPVTIGSNTLIAAGTTVTRDVPADSLAIARTPQINKEGWKLRKRDQ</sequence>
<feature type="chain" id="PRO_0000233776" description="Bifunctional protein GlmU">
    <location>
        <begin position="1"/>
        <end position="476"/>
    </location>
</feature>
<feature type="region of interest" description="Pyrophosphorylase" evidence="1">
    <location>
        <begin position="1"/>
        <end position="232"/>
    </location>
</feature>
<feature type="region of interest" description="Linker" evidence="1">
    <location>
        <begin position="233"/>
        <end position="253"/>
    </location>
</feature>
<feature type="region of interest" description="N-acetyltransferase" evidence="1">
    <location>
        <begin position="254"/>
        <end position="476"/>
    </location>
</feature>
<feature type="active site" description="Proton acceptor" evidence="1">
    <location>
        <position position="383"/>
    </location>
</feature>
<feature type="binding site" evidence="1">
    <location>
        <begin position="9"/>
        <end position="12"/>
    </location>
    <ligand>
        <name>UDP-N-acetyl-alpha-D-glucosamine</name>
        <dbReference type="ChEBI" id="CHEBI:57705"/>
    </ligand>
</feature>
<feature type="binding site" evidence="1">
    <location>
        <position position="23"/>
    </location>
    <ligand>
        <name>UDP-N-acetyl-alpha-D-glucosamine</name>
        <dbReference type="ChEBI" id="CHEBI:57705"/>
    </ligand>
</feature>
<feature type="binding site" evidence="1">
    <location>
        <position position="75"/>
    </location>
    <ligand>
        <name>UDP-N-acetyl-alpha-D-glucosamine</name>
        <dbReference type="ChEBI" id="CHEBI:57705"/>
    </ligand>
</feature>
<feature type="binding site" evidence="1">
    <location>
        <begin position="80"/>
        <end position="81"/>
    </location>
    <ligand>
        <name>UDP-N-acetyl-alpha-D-glucosamine</name>
        <dbReference type="ChEBI" id="CHEBI:57705"/>
    </ligand>
</feature>
<feature type="binding site" evidence="1">
    <location>
        <position position="105"/>
    </location>
    <ligand>
        <name>Mg(2+)</name>
        <dbReference type="ChEBI" id="CHEBI:18420"/>
    </ligand>
</feature>
<feature type="binding site" evidence="1">
    <location>
        <position position="142"/>
    </location>
    <ligand>
        <name>UDP-N-acetyl-alpha-D-glucosamine</name>
        <dbReference type="ChEBI" id="CHEBI:57705"/>
    </ligand>
</feature>
<feature type="binding site" evidence="1">
    <location>
        <position position="157"/>
    </location>
    <ligand>
        <name>UDP-N-acetyl-alpha-D-glucosamine</name>
        <dbReference type="ChEBI" id="CHEBI:57705"/>
    </ligand>
</feature>
<feature type="binding site" evidence="1">
    <location>
        <position position="172"/>
    </location>
    <ligand>
        <name>UDP-N-acetyl-alpha-D-glucosamine</name>
        <dbReference type="ChEBI" id="CHEBI:57705"/>
    </ligand>
</feature>
<feature type="binding site" evidence="1">
    <location>
        <position position="230"/>
    </location>
    <ligand>
        <name>Mg(2+)</name>
        <dbReference type="ChEBI" id="CHEBI:18420"/>
    </ligand>
</feature>
<feature type="binding site" evidence="1">
    <location>
        <position position="230"/>
    </location>
    <ligand>
        <name>UDP-N-acetyl-alpha-D-glucosamine</name>
        <dbReference type="ChEBI" id="CHEBI:57705"/>
    </ligand>
</feature>
<feature type="binding site" evidence="1">
    <location>
        <position position="353"/>
    </location>
    <ligand>
        <name>UDP-N-acetyl-alpha-D-glucosamine</name>
        <dbReference type="ChEBI" id="CHEBI:57705"/>
    </ligand>
</feature>
<feature type="binding site" evidence="1">
    <location>
        <position position="371"/>
    </location>
    <ligand>
        <name>UDP-N-acetyl-alpha-D-glucosamine</name>
        <dbReference type="ChEBI" id="CHEBI:57705"/>
    </ligand>
</feature>
<feature type="binding site" evidence="1">
    <location>
        <position position="386"/>
    </location>
    <ligand>
        <name>UDP-N-acetyl-alpha-D-glucosamine</name>
        <dbReference type="ChEBI" id="CHEBI:57705"/>
    </ligand>
</feature>
<feature type="binding site" evidence="1">
    <location>
        <position position="397"/>
    </location>
    <ligand>
        <name>UDP-N-acetyl-alpha-D-glucosamine</name>
        <dbReference type="ChEBI" id="CHEBI:57705"/>
    </ligand>
</feature>
<feature type="binding site" evidence="1">
    <location>
        <begin position="406"/>
        <end position="407"/>
    </location>
    <ligand>
        <name>acetyl-CoA</name>
        <dbReference type="ChEBI" id="CHEBI:57288"/>
    </ligand>
</feature>
<feature type="binding site" evidence="1">
    <location>
        <position position="425"/>
    </location>
    <ligand>
        <name>acetyl-CoA</name>
        <dbReference type="ChEBI" id="CHEBI:57288"/>
    </ligand>
</feature>
<feature type="binding site" evidence="1">
    <location>
        <position position="443"/>
    </location>
    <ligand>
        <name>acetyl-CoA</name>
        <dbReference type="ChEBI" id="CHEBI:57288"/>
    </ligand>
</feature>
<feature type="binding site" evidence="1">
    <location>
        <position position="460"/>
    </location>
    <ligand>
        <name>acetyl-CoA</name>
        <dbReference type="ChEBI" id="CHEBI:57288"/>
    </ligand>
</feature>